<keyword id="KW-0002">3D-structure</keyword>
<keyword id="KW-0051">Antiviral defense</keyword>
<keyword id="KW-0378">Hydrolase</keyword>
<keyword id="KW-0547">Nucleotide-binding</keyword>
<sequence length="314" mass="36072">MRGKRIFIGSSSEELRLAEQAKKILEKNTNYQVTIWNENMWDKAVFRLNNSYLNDLIRATLHFDFGILIGTKDDKVIFRGSEEIQPRDNVLFELGLFIGRLGLNNCAFLVDEEIKILSDVKGISLARFKEKDSDSFNNAVLSIRESFDRQNDSDINFFPSSTLAAVYYENFIKPTCSHIINNGGLLDKNGYIYKKCTIKIIIPKKLTSDVNSQFQRIKAKIETKELSFEYLGRPRNINVEIIAEDGEVMIIDFPTILSGINYAISNLLPQDFNSMSVDYEAILSRELERFVYTLKKIALRDGFDDLIKIVDEDN</sequence>
<name>CAP12_CAPGB</name>
<feature type="chain" id="PRO_0000451877" description="CD-NTase-associated protein 12">
    <location>
        <begin position="1"/>
        <end position="314"/>
    </location>
</feature>
<feature type="domain" description="TIR" evidence="2 7">
    <location>
        <begin position="5"/>
        <end position="129"/>
    </location>
</feature>
<feature type="region of interest" description="STING domain" evidence="1">
    <location>
        <begin position="160"/>
        <end position="314"/>
    </location>
</feature>
<feature type="binding site" evidence="1">
    <location>
        <position position="171"/>
    </location>
    <ligand>
        <name>3',3'-c-di-GMP</name>
        <dbReference type="ChEBI" id="CHEBI:58805"/>
    </ligand>
</feature>
<feature type="binding site" evidence="1">
    <location>
        <position position="234"/>
    </location>
    <ligand>
        <name>3',3'-c-di-GMP</name>
        <dbReference type="ChEBI" id="CHEBI:58805"/>
    </ligand>
</feature>
<feature type="binding site" evidence="1">
    <location>
        <position position="252"/>
    </location>
    <ligand>
        <name>3',3'-c-di-GMP</name>
        <dbReference type="ChEBI" id="CHEBI:58805"/>
    </ligand>
</feature>
<feature type="helix" evidence="9">
    <location>
        <begin position="153"/>
        <end position="155"/>
    </location>
</feature>
<feature type="helix" evidence="9">
    <location>
        <begin position="159"/>
        <end position="170"/>
    </location>
</feature>
<feature type="helix" evidence="9">
    <location>
        <begin position="172"/>
        <end position="182"/>
    </location>
</feature>
<feature type="strand" evidence="9">
    <location>
        <begin position="184"/>
        <end position="186"/>
    </location>
</feature>
<feature type="strand" evidence="9">
    <location>
        <begin position="192"/>
        <end position="202"/>
    </location>
</feature>
<feature type="helix" evidence="9">
    <location>
        <begin position="210"/>
        <end position="218"/>
    </location>
</feature>
<feature type="strand" evidence="9">
    <location>
        <begin position="224"/>
        <end position="228"/>
    </location>
</feature>
<feature type="strand" evidence="9">
    <location>
        <begin position="235"/>
        <end position="239"/>
    </location>
</feature>
<feature type="strand" evidence="9">
    <location>
        <begin position="247"/>
        <end position="252"/>
    </location>
</feature>
<feature type="helix" evidence="9">
    <location>
        <begin position="255"/>
        <end position="258"/>
    </location>
</feature>
<feature type="helix" evidence="9">
    <location>
        <begin position="259"/>
        <end position="267"/>
    </location>
</feature>
<feature type="helix" evidence="9">
    <location>
        <begin position="279"/>
        <end position="300"/>
    </location>
</feature>
<feature type="helix" evidence="9">
    <location>
        <begin position="304"/>
        <end position="306"/>
    </location>
</feature>
<feature type="strand" evidence="9">
    <location>
        <begin position="307"/>
        <end position="311"/>
    </location>
</feature>
<organism>
    <name type="scientific">Capnocytophaga granulosa (strain ATCC 51502 / DSM 11449 / JCM 8566 / LMG 16022 / NCTC 12948 / B0611)</name>
    <dbReference type="NCBI Taxonomy" id="641143"/>
    <lineage>
        <taxon>Bacteria</taxon>
        <taxon>Pseudomonadati</taxon>
        <taxon>Bacteroidota</taxon>
        <taxon>Flavobacteriia</taxon>
        <taxon>Flavobacteriales</taxon>
        <taxon>Flavobacteriaceae</taxon>
        <taxon>Capnocytophaga</taxon>
    </lineage>
</organism>
<reference key="1">
    <citation type="submission" date="2018-06" db="EMBL/GenBank/DDBJ databases">
        <authorList>
            <consortium name="Pathogen Informatics"/>
            <person name="Doyle S."/>
        </authorList>
    </citation>
    <scope>NUCLEOTIDE SEQUENCE [LARGE SCALE GENOMIC DNA]</scope>
    <source>
        <strain>ATCC 51502 / DSM 11449 / JCM 8566 / LMG 16022 / NCTC 12948 / B0611</strain>
    </source>
</reference>
<reference key="2">
    <citation type="journal article" date="2020" name="Nat. Microbiol.">
        <title>Diversity and classification of cyclic-oligonucleotide-based anti-phage signalling systems.</title>
        <authorList>
            <person name="Millman A."/>
            <person name="Melamed S."/>
            <person name="Amitai G."/>
            <person name="Sorek R."/>
        </authorList>
    </citation>
    <scope>CLASSIFICATION AND NOMENCLATURE</scope>
</reference>
<reference evidence="8" key="3">
    <citation type="journal article" date="2020" name="Nature">
        <title>STING cyclic dinucleotide sensing originated in bacteria.</title>
        <authorList>
            <person name="Morehouse B.R."/>
            <person name="Govande A.A."/>
            <person name="Millman A."/>
            <person name="Keszei A.F.A."/>
            <person name="Lowey B."/>
            <person name="Ofir G."/>
            <person name="Shao S."/>
            <person name="Sorek R."/>
            <person name="Kranzusch P.J."/>
        </authorList>
    </citation>
    <scope>X-RAY CRYSTALLOGRAPHY (2.80 ANGSTROMS) OF 151-314</scope>
    <scope>SUBUNIT</scope>
    <scope>DOMAIN</scope>
    <scope>C-DI-GMP-BINDING</scope>
    <scope>NUCLEOTIDE-BINDING</scope>
</reference>
<comment type="function">
    <text evidence="1 4 7">Effector protein of a CBASS antiviral system with NAD(+) hydrolase activity (By similarity). CBASS (cyclic oligonucleotide-based antiphage signaling system) provides immunity against bacteriophage. The CD-NTase protein synthesizes cyclic nucleotides in response to infection; these serve as specific second messenger signals. The signals activate a diverse range of effectors, leading to bacterial cell death and thus abortive phage infection. A type I-(GG) CBASS system (PubMed:32839535).</text>
</comment>
<comment type="function">
    <text evidence="1 3">Binds c-di-GMP (synthesized by the cognate CdnE encoded upstream in the same operon), and about 10-fold less well 3'3'-cGAMP, but not c-di-AMP, 2'-3'-cGAMP or cUMP-AMP (tested without the N-terminal TIR domain) (PubMed:32877915). Upon activation by c-di-GMP forms filaments which hydrolyze NAD(+); filament formation is required for enzyme activation (By similarity).</text>
</comment>
<comment type="catalytic activity">
    <reaction evidence="1">
        <text>NAD(+) + H2O = ADP-D-ribose + nicotinamide + H(+)</text>
        <dbReference type="Rhea" id="RHEA:16301"/>
        <dbReference type="ChEBI" id="CHEBI:15377"/>
        <dbReference type="ChEBI" id="CHEBI:15378"/>
        <dbReference type="ChEBI" id="CHEBI:17154"/>
        <dbReference type="ChEBI" id="CHEBI:57540"/>
        <dbReference type="ChEBI" id="CHEBI:57967"/>
        <dbReference type="EC" id="3.2.2.5"/>
    </reaction>
</comment>
<comment type="activity regulation">
    <text evidence="1 7">NAD(+) hydrolase activity is strongly stimulated by c-di-GMP, weakly by 3'3'-cGAMP, very weakly by c-di-AMP but not at all by 2'3'-cGAMP (Probable). Self-association of TIR domains is required for NADase activity (By similarity).</text>
</comment>
<comment type="subunit">
    <text evidence="1 3">Homodimer (PubMed:32877915). Forms homodimers; in the presence of c-di-GMP forms filaments with an ordered array of parallel-stacked subunits (By similarity).</text>
</comment>
<comment type="domain">
    <text evidence="1 7">The N-terminal TIR domain mediates NAD(+) hydrolase (NADase) activity. The cyclic nucleotide binds in C-terminal bacterial STING region. Comparison of structures from 2 different bacteria suggests that cyclic nucleotide binding causes domain rotation to form a lid which seals the nucleotide-binding pocket (PubMed:32877915). Upon binding to c-di-GMP the STING region closes around the ligand, which is bound by residues from 2 adjacent subunits. STING-STING interactions are the main drivers of filamentation; rearrangements in the STING domain allow reorganization of packing of the TIR domains, forming the NADase active site; cross-filament contacts strengthen the assembly (By similarity).</text>
</comment>
<comment type="similarity">
    <text evidence="6">In the C-terminal section; belongs to the bacterial STING family.</text>
</comment>
<gene>
    <name evidence="6" type="primary">cap12</name>
    <name type="ORF">NCTC12948_02565</name>
</gene>
<dbReference type="EC" id="3.2.2.5" evidence="1"/>
<dbReference type="EMBL" id="UFVE01000002">
    <property type="protein sequence ID" value="SUX93682.1"/>
    <property type="molecule type" value="Genomic_DNA"/>
</dbReference>
<dbReference type="RefSeq" id="WP_016421263.1">
    <property type="nucleotide sequence ID" value="NZ_KE150243.1"/>
</dbReference>
<dbReference type="PDB" id="6WT5">
    <property type="method" value="X-ray"/>
    <property type="resolution" value="2.80 A"/>
    <property type="chains" value="A/B/C/D=151-314"/>
</dbReference>
<dbReference type="PDBsum" id="6WT5"/>
<dbReference type="SMR" id="A0A381HAP5"/>
<dbReference type="STRING" id="45242.SAMN05444420_1205"/>
<dbReference type="GeneID" id="85018444"/>
<dbReference type="GO" id="GO:0003953">
    <property type="term" value="F:NAD+ nucleosidase activity"/>
    <property type="evidence" value="ECO:0007669"/>
    <property type="project" value="UniProtKB-EC"/>
</dbReference>
<dbReference type="GO" id="GO:0050135">
    <property type="term" value="F:NADP+ nucleosidase activity"/>
    <property type="evidence" value="ECO:0007669"/>
    <property type="project" value="InterPro"/>
</dbReference>
<dbReference type="GO" id="GO:0000166">
    <property type="term" value="F:nucleotide binding"/>
    <property type="evidence" value="ECO:0007669"/>
    <property type="project" value="UniProtKB-KW"/>
</dbReference>
<dbReference type="GO" id="GO:0051607">
    <property type="term" value="P:defense response to virus"/>
    <property type="evidence" value="ECO:0007669"/>
    <property type="project" value="UniProtKB-KW"/>
</dbReference>
<dbReference type="CDD" id="cd22659">
    <property type="entry name" value="STING_bact-like"/>
    <property type="match status" value="1"/>
</dbReference>
<dbReference type="InterPro" id="IPR019302">
    <property type="entry name" value="CAP12/PCTIR_TIR_dom"/>
</dbReference>
<dbReference type="InterPro" id="IPR046876">
    <property type="entry name" value="Prok_STING"/>
</dbReference>
<dbReference type="Pfam" id="PF10137">
    <property type="entry name" value="CAP12-PCTIR_TIR"/>
    <property type="match status" value="1"/>
</dbReference>
<dbReference type="Pfam" id="PF20300">
    <property type="entry name" value="prok_STING"/>
    <property type="match status" value="1"/>
</dbReference>
<proteinExistence type="evidence at protein level"/>
<evidence type="ECO:0000250" key="1">
    <source>
        <dbReference type="UniProtKB" id="A0A2T5Y4G4"/>
    </source>
</evidence>
<evidence type="ECO:0000255" key="2">
    <source>
        <dbReference type="PROSITE-ProRule" id="PRU00204"/>
    </source>
</evidence>
<evidence type="ECO:0000269" key="3">
    <source>
    </source>
</evidence>
<evidence type="ECO:0000303" key="4">
    <source>
    </source>
</evidence>
<evidence type="ECO:0000303" key="5">
    <source>
    </source>
</evidence>
<evidence type="ECO:0000305" key="6"/>
<evidence type="ECO:0000305" key="7">
    <source>
    </source>
</evidence>
<evidence type="ECO:0007744" key="8">
    <source>
        <dbReference type="PDB" id="6WT5"/>
    </source>
</evidence>
<evidence type="ECO:0007829" key="9">
    <source>
        <dbReference type="PDB" id="6WT5"/>
    </source>
</evidence>
<accession>A0A381HAP5</accession>
<protein>
    <recommendedName>
        <fullName evidence="6">CD-NTase-associated protein 12</fullName>
        <shortName evidence="6">Cap12</shortName>
    </recommendedName>
    <alternativeName>
        <fullName evidence="1">NAD(+) hydrolase</fullName>
        <ecNumber evidence="1">3.2.2.5</ecNumber>
    </alternativeName>
    <alternativeName>
        <fullName evidence="5">TIR-STING</fullName>
        <shortName evidence="5">CgSTING</shortName>
    </alternativeName>
</protein>